<feature type="chain" id="PRO_0000076489" description="Regulatory protein cys-3">
    <location>
        <begin position="1"/>
        <end position="236"/>
    </location>
</feature>
<feature type="domain" description="bZIP" evidence="1">
    <location>
        <begin position="99"/>
        <end position="162"/>
    </location>
</feature>
<feature type="region of interest" description="Disordered" evidence="2">
    <location>
        <begin position="26"/>
        <end position="89"/>
    </location>
</feature>
<feature type="region of interest" description="Basic motif" evidence="1">
    <location>
        <begin position="105"/>
        <end position="137"/>
    </location>
</feature>
<feature type="region of interest" description="Leucine-zipper" evidence="1">
    <location>
        <begin position="141"/>
        <end position="155"/>
    </location>
</feature>
<feature type="region of interest" description="Disordered" evidence="2">
    <location>
        <begin position="189"/>
        <end position="236"/>
    </location>
</feature>
<feature type="compositionally biased region" description="Polar residues" evidence="2">
    <location>
        <begin position="28"/>
        <end position="37"/>
    </location>
</feature>
<feature type="compositionally biased region" description="Basic and acidic residues" evidence="2">
    <location>
        <begin position="193"/>
        <end position="211"/>
    </location>
</feature>
<feature type="compositionally biased region" description="Low complexity" evidence="2">
    <location>
        <begin position="212"/>
        <end position="223"/>
    </location>
</feature>
<feature type="mutagenesis site" description="Loss of DNA-binding.">
    <original>K</original>
    <variation>Q</variation>
    <location>
        <position position="105"/>
    </location>
</feature>
<feature type="mutagenesis site" description="Loss of DNA-binding.">
    <original>R</original>
    <variation>Q</variation>
    <location>
        <position position="106"/>
    </location>
</feature>
<reference key="1">
    <citation type="journal article" date="1989" name="Mol. Cell. Biol.">
        <title>cys-3, the positive-acting sulfur regulatory gene of Neurospora crassa, encodes a protein with a putative leucine zipper DNA-binding element.</title>
        <authorList>
            <person name="Fu Y.-H."/>
            <person name="Paietta J.V."/>
            <person name="Mannix D.G."/>
            <person name="Marzluf G.A."/>
        </authorList>
    </citation>
    <scope>NUCLEOTIDE SEQUENCE [GENOMIC DNA]</scope>
</reference>
<reference key="2">
    <citation type="journal article" date="2003" name="Nucleic Acids Res.">
        <title>What's in the genome of a filamentous fungus? Analysis of the Neurospora genome sequence.</title>
        <authorList>
            <person name="Mannhaupt G."/>
            <person name="Montrone C."/>
            <person name="Haase D."/>
            <person name="Mewes H.-W."/>
            <person name="Aign V."/>
            <person name="Hoheisel J.D."/>
            <person name="Fartmann B."/>
            <person name="Nyakatura G."/>
            <person name="Kempken F."/>
            <person name="Maier J."/>
            <person name="Schulte U."/>
        </authorList>
    </citation>
    <scope>NUCLEOTIDE SEQUENCE [LARGE SCALE GENOMIC DNA]</scope>
    <source>
        <strain>ATCC 24698 / 74-OR23-1A / CBS 708.71 / DSM 1257 / FGSC 987</strain>
    </source>
</reference>
<reference key="3">
    <citation type="journal article" date="2003" name="Nature">
        <title>The genome sequence of the filamentous fungus Neurospora crassa.</title>
        <authorList>
            <person name="Galagan J.E."/>
            <person name="Calvo S.E."/>
            <person name="Borkovich K.A."/>
            <person name="Selker E.U."/>
            <person name="Read N.D."/>
            <person name="Jaffe D.B."/>
            <person name="FitzHugh W."/>
            <person name="Ma L.-J."/>
            <person name="Smirnov S."/>
            <person name="Purcell S."/>
            <person name="Rehman B."/>
            <person name="Elkins T."/>
            <person name="Engels R."/>
            <person name="Wang S."/>
            <person name="Nielsen C.B."/>
            <person name="Butler J."/>
            <person name="Endrizzi M."/>
            <person name="Qui D."/>
            <person name="Ianakiev P."/>
            <person name="Bell-Pedersen D."/>
            <person name="Nelson M.A."/>
            <person name="Werner-Washburne M."/>
            <person name="Selitrennikoff C.P."/>
            <person name="Kinsey J.A."/>
            <person name="Braun E.L."/>
            <person name="Zelter A."/>
            <person name="Schulte U."/>
            <person name="Kothe G.O."/>
            <person name="Jedd G."/>
            <person name="Mewes H.-W."/>
            <person name="Staben C."/>
            <person name="Marcotte E."/>
            <person name="Greenberg D."/>
            <person name="Roy A."/>
            <person name="Foley K."/>
            <person name="Naylor J."/>
            <person name="Stange-Thomann N."/>
            <person name="Barrett R."/>
            <person name="Gnerre S."/>
            <person name="Kamal M."/>
            <person name="Kamvysselis M."/>
            <person name="Mauceli E.W."/>
            <person name="Bielke C."/>
            <person name="Rudd S."/>
            <person name="Frishman D."/>
            <person name="Krystofova S."/>
            <person name="Rasmussen C."/>
            <person name="Metzenberg R.L."/>
            <person name="Perkins D.D."/>
            <person name="Kroken S."/>
            <person name="Cogoni C."/>
            <person name="Macino G."/>
            <person name="Catcheside D.E.A."/>
            <person name="Li W."/>
            <person name="Pratt R.J."/>
            <person name="Osmani S.A."/>
            <person name="DeSouza C.P.C."/>
            <person name="Glass N.L."/>
            <person name="Orbach M.J."/>
            <person name="Berglund J.A."/>
            <person name="Voelker R."/>
            <person name="Yarden O."/>
            <person name="Plamann M."/>
            <person name="Seiler S."/>
            <person name="Dunlap J.C."/>
            <person name="Radford A."/>
            <person name="Aramayo R."/>
            <person name="Natvig D.O."/>
            <person name="Alex L.A."/>
            <person name="Mannhaupt G."/>
            <person name="Ebbole D.J."/>
            <person name="Freitag M."/>
            <person name="Paulsen I."/>
            <person name="Sachs M.S."/>
            <person name="Lander E.S."/>
            <person name="Nusbaum C."/>
            <person name="Birren B.W."/>
        </authorList>
    </citation>
    <scope>NUCLEOTIDE SEQUENCE [LARGE SCALE GENOMIC DNA]</scope>
    <source>
        <strain>ATCC 24698 / 74-OR23-1A / CBS 708.71 / DSM 1257 / FGSC 987</strain>
    </source>
</reference>
<reference key="4">
    <citation type="journal article" date="1990" name="J. Biol. Chem.">
        <title>cys-3, the positive-acting sulfur regulatory gene of Neurospora crassa, encodes a sequence-specific DNA-binding protein.</title>
        <authorList>
            <person name="Fu Y.-H."/>
            <person name="Marzluf G.A."/>
        </authorList>
    </citation>
    <scope>CHARACTERIZATION</scope>
</reference>
<reference key="5">
    <citation type="journal article" date="1991" name="Mol. Cell. Biol.">
        <title>Mutational analysis of the DNA-binding domain of the CYS3 regulatory protein of Neurospora crassa.</title>
        <authorList>
            <person name="Kanaan M.N."/>
            <person name="Marzluf G.A."/>
        </authorList>
    </citation>
    <scope>MUTAGENESIS</scope>
</reference>
<reference key="6">
    <citation type="journal article" date="1992" name="Biochemistry">
        <title>The DNA-binding domain of the Cys-3 regulatory protein of Neurospora crassa is bipartite.</title>
        <authorList>
            <person name="Kanaan M.N."/>
            <person name="Fu Y.-H."/>
            <person name="Marzluf G.A."/>
        </authorList>
    </citation>
    <scope>MUTAGENESIS</scope>
</reference>
<organism>
    <name type="scientific">Neurospora crassa (strain ATCC 24698 / 74-OR23-1A / CBS 708.71 / DSM 1257 / FGSC 987)</name>
    <dbReference type="NCBI Taxonomy" id="367110"/>
    <lineage>
        <taxon>Eukaryota</taxon>
        <taxon>Fungi</taxon>
        <taxon>Dikarya</taxon>
        <taxon>Ascomycota</taxon>
        <taxon>Pezizomycotina</taxon>
        <taxon>Sordariomycetes</taxon>
        <taxon>Sordariomycetidae</taxon>
        <taxon>Sordariales</taxon>
        <taxon>Sordariaceae</taxon>
        <taxon>Neurospora</taxon>
    </lineage>
</organism>
<gene>
    <name type="primary">cys-3</name>
    <name type="ORF">B2A19.70</name>
    <name type="ORF">NCU21522</name>
</gene>
<keyword id="KW-0010">Activator</keyword>
<keyword id="KW-0238">DNA-binding</keyword>
<keyword id="KW-0539">Nucleus</keyword>
<keyword id="KW-1185">Reference proteome</keyword>
<keyword id="KW-0346">Stress response</keyword>
<keyword id="KW-0804">Transcription</keyword>
<keyword id="KW-0805">Transcription regulation</keyword>
<proteinExistence type="evidence at protein level"/>
<evidence type="ECO:0000255" key="1">
    <source>
        <dbReference type="PROSITE-ProRule" id="PRU00978"/>
    </source>
</evidence>
<evidence type="ECO:0000256" key="2">
    <source>
        <dbReference type="SAM" id="MobiDB-lite"/>
    </source>
</evidence>
<evidence type="ECO:0000305" key="3"/>
<sequence length="236" mass="25895">MSSADFNFGDFTTTYTSPTIPAYPDTLGQLQPIQPNPQAAYPPVSQHHASHHVQHPHQPGYVLSNPPQLSGNKRKASDAMSVPPTPGARVMSFEEASRLAAEEDKRKRNTAASARFRIKKKQREQALEKSAKEMSEKVTQLEGRIQALETENKWLKGLVTEKHGSKEDILKLLREFSAHAAKVSKDAAAAAADKAEAAADKADAERAREESSFCVSTSSPSSDESVDTDNKKRRKD</sequence>
<accession>P22697</accession>
<accession>Q7RU61</accession>
<comment type="function">
    <text>Turns on the expression of structural genes which encode sulfur-catabolic enzymes. Binds to sequence elements upstream of these genes.</text>
</comment>
<comment type="subunit">
    <text>Binds DNA as a dimer.</text>
</comment>
<comment type="subcellular location">
    <subcellularLocation>
        <location>Nucleus</location>
    </subcellularLocation>
</comment>
<comment type="induction">
    <text>By sulfur deprivation.</text>
</comment>
<comment type="similarity">
    <text evidence="3">Belongs to the bZIP family. GCN4 subfamily.</text>
</comment>
<comment type="sequence caution" evidence="3">
    <conflict type="erroneous gene model prediction">
        <sequence resource="EMBL-CDS" id="EAA27579"/>
    </conflict>
    <text>The predicted gene NCU03536 has been split into 2 genes: NCU21521 and NCU21522.</text>
</comment>
<name>CYS3_NEUCR</name>
<dbReference type="EMBL" id="M26008">
    <property type="protein sequence ID" value="AAA33585.1"/>
    <property type="molecule type" value="Genomic_DNA"/>
</dbReference>
<dbReference type="EMBL" id="AL390092">
    <property type="protein sequence ID" value="CAB98237.1"/>
    <property type="molecule type" value="Genomic_DNA"/>
</dbReference>
<dbReference type="EMBL" id="CM002237">
    <property type="protein sequence ID" value="EAA27579.2"/>
    <property type="status" value="ALT_SEQ"/>
    <property type="molecule type" value="Genomic_DNA"/>
</dbReference>
<dbReference type="PIR" id="A30225">
    <property type="entry name" value="A30225"/>
</dbReference>
<dbReference type="PIR" id="T51073">
    <property type="entry name" value="T51073"/>
</dbReference>
<dbReference type="SMR" id="P22697"/>
<dbReference type="STRING" id="367110.P22697"/>
<dbReference type="PaxDb" id="5141-EFNCRP00000002554"/>
<dbReference type="EnsemblFungi" id="EAA27579">
    <property type="protein sequence ID" value="EAA27579"/>
    <property type="gene ID" value="NCU03536"/>
</dbReference>
<dbReference type="HOGENOM" id="CLU_056562_0_0_1"/>
<dbReference type="InParanoid" id="P22697"/>
<dbReference type="Proteomes" id="UP000001805">
    <property type="component" value="Chromosome 6, Linkage Group II"/>
</dbReference>
<dbReference type="GO" id="GO:0005634">
    <property type="term" value="C:nucleus"/>
    <property type="evidence" value="ECO:0007669"/>
    <property type="project" value="UniProtKB-SubCell"/>
</dbReference>
<dbReference type="GO" id="GO:0003677">
    <property type="term" value="F:DNA binding"/>
    <property type="evidence" value="ECO:0007669"/>
    <property type="project" value="UniProtKB-KW"/>
</dbReference>
<dbReference type="GO" id="GO:0003700">
    <property type="term" value="F:DNA-binding transcription factor activity"/>
    <property type="evidence" value="ECO:0007669"/>
    <property type="project" value="InterPro"/>
</dbReference>
<dbReference type="CDD" id="cd14705">
    <property type="entry name" value="bZIP_Zip1"/>
    <property type="match status" value="1"/>
</dbReference>
<dbReference type="FunFam" id="1.20.5.170:FF:000075">
    <property type="entry name" value="BZIP transcription factor (MetR)"/>
    <property type="match status" value="1"/>
</dbReference>
<dbReference type="Gene3D" id="1.20.5.170">
    <property type="match status" value="1"/>
</dbReference>
<dbReference type="InterPro" id="IPR004827">
    <property type="entry name" value="bZIP"/>
</dbReference>
<dbReference type="InterPro" id="IPR046347">
    <property type="entry name" value="bZIP_sf"/>
</dbReference>
<dbReference type="PANTHER" id="PTHR13044">
    <property type="entry name" value="ACTIVATING TRANSCRIPTION FACTOR ATF 4/5"/>
    <property type="match status" value="1"/>
</dbReference>
<dbReference type="PANTHER" id="PTHR13044:SF14">
    <property type="entry name" value="CRYPTOCEPHAL, ISOFORM A"/>
    <property type="match status" value="1"/>
</dbReference>
<dbReference type="Pfam" id="PF07716">
    <property type="entry name" value="bZIP_2"/>
    <property type="match status" value="1"/>
</dbReference>
<dbReference type="SMART" id="SM00338">
    <property type="entry name" value="BRLZ"/>
    <property type="match status" value="1"/>
</dbReference>
<dbReference type="SUPFAM" id="SSF57959">
    <property type="entry name" value="Leucine zipper domain"/>
    <property type="match status" value="1"/>
</dbReference>
<dbReference type="PROSITE" id="PS50217">
    <property type="entry name" value="BZIP"/>
    <property type="match status" value="1"/>
</dbReference>
<dbReference type="PROSITE" id="PS00036">
    <property type="entry name" value="BZIP_BASIC"/>
    <property type="match status" value="1"/>
</dbReference>
<protein>
    <recommendedName>
        <fullName>Regulatory protein cys-3</fullName>
    </recommendedName>
</protein>